<feature type="chain" id="PRO_1000134298" description="NADPH-dependent 7-cyano-7-deazaguanine reductase">
    <location>
        <begin position="1"/>
        <end position="116"/>
    </location>
</feature>
<feature type="active site" description="Thioimide intermediate" evidence="1">
    <location>
        <position position="31"/>
    </location>
</feature>
<feature type="active site" description="Proton donor" evidence="1">
    <location>
        <position position="38"/>
    </location>
</feature>
<feature type="binding site" evidence="1">
    <location>
        <begin position="53"/>
        <end position="55"/>
    </location>
    <ligand>
        <name>substrate</name>
    </ligand>
</feature>
<feature type="binding site" evidence="1">
    <location>
        <begin position="72"/>
        <end position="73"/>
    </location>
    <ligand>
        <name>substrate</name>
    </ligand>
</feature>
<comment type="function">
    <text evidence="1">Catalyzes the NADPH-dependent reduction of 7-cyano-7-deazaguanine (preQ0) to 7-aminomethyl-7-deazaguanine (preQ1).</text>
</comment>
<comment type="catalytic activity">
    <reaction evidence="1">
        <text>7-aminomethyl-7-carbaguanine + 2 NADP(+) = 7-cyano-7-deazaguanine + 2 NADPH + 3 H(+)</text>
        <dbReference type="Rhea" id="RHEA:13409"/>
        <dbReference type="ChEBI" id="CHEBI:15378"/>
        <dbReference type="ChEBI" id="CHEBI:45075"/>
        <dbReference type="ChEBI" id="CHEBI:57783"/>
        <dbReference type="ChEBI" id="CHEBI:58349"/>
        <dbReference type="ChEBI" id="CHEBI:58703"/>
        <dbReference type="EC" id="1.7.1.13"/>
    </reaction>
</comment>
<comment type="pathway">
    <text evidence="1">tRNA modification; tRNA-queuosine biosynthesis.</text>
</comment>
<comment type="subcellular location">
    <subcellularLocation>
        <location evidence="1">Cytoplasm</location>
    </subcellularLocation>
</comment>
<comment type="similarity">
    <text evidence="1">Belongs to the GTP cyclohydrolase I family. QueF type 1 subfamily.</text>
</comment>
<protein>
    <recommendedName>
        <fullName evidence="1">NADPH-dependent 7-cyano-7-deazaguanine reductase</fullName>
        <ecNumber evidence="1">1.7.1.13</ecNumber>
    </recommendedName>
    <alternativeName>
        <fullName evidence="1">7-cyano-7-carbaguanine reductase</fullName>
    </alternativeName>
    <alternativeName>
        <fullName evidence="1">NADPH-dependent nitrile oxidoreductase</fullName>
    </alternativeName>
    <alternativeName>
        <fullName evidence="1">PreQ(0) reductase</fullName>
    </alternativeName>
</protein>
<name>QUEF_CHLP8</name>
<reference key="1">
    <citation type="submission" date="2008-06" db="EMBL/GenBank/DDBJ databases">
        <title>Complete sequence of Chlorobaculum parvum NCIB 8327.</title>
        <authorList>
            <consortium name="US DOE Joint Genome Institute"/>
            <person name="Lucas S."/>
            <person name="Copeland A."/>
            <person name="Lapidus A."/>
            <person name="Glavina del Rio T."/>
            <person name="Dalin E."/>
            <person name="Tice H."/>
            <person name="Bruce D."/>
            <person name="Goodwin L."/>
            <person name="Pitluck S."/>
            <person name="Schmutz J."/>
            <person name="Larimer F."/>
            <person name="Land M."/>
            <person name="Hauser L."/>
            <person name="Kyrpides N."/>
            <person name="Mikhailova N."/>
            <person name="Zhao F."/>
            <person name="Li T."/>
            <person name="Liu Z."/>
            <person name="Overmann J."/>
            <person name="Bryant D.A."/>
            <person name="Richardson P."/>
        </authorList>
    </citation>
    <scope>NUCLEOTIDE SEQUENCE [LARGE SCALE GENOMIC DNA]</scope>
    <source>
        <strain>DSM 263 / NCIMB 8327</strain>
    </source>
</reference>
<proteinExistence type="inferred from homology"/>
<accession>B3QM19</accession>
<keyword id="KW-0963">Cytoplasm</keyword>
<keyword id="KW-0521">NADP</keyword>
<keyword id="KW-0560">Oxidoreductase</keyword>
<keyword id="KW-0671">Queuosine biosynthesis</keyword>
<gene>
    <name evidence="1" type="primary">queF</name>
    <name type="ordered locus">Cpar_0550</name>
</gene>
<evidence type="ECO:0000255" key="1">
    <source>
        <dbReference type="HAMAP-Rule" id="MF_00818"/>
    </source>
</evidence>
<sequence length="116" mass="13260">MNKEIIEVFDNTFPNRDYTIEIVNPEFTSVCPKTGLPDFGTITITYVPDKSCIELKSLKYYFLEFRNAGIFYENITNTILDHLVEACQPKSMTVKTDWNARGGITETVTVSYTAEK</sequence>
<organism>
    <name type="scientific">Chlorobaculum parvum (strain DSM 263 / NCIMB 8327)</name>
    <name type="common">Chlorobium vibrioforme subsp. thiosulfatophilum</name>
    <dbReference type="NCBI Taxonomy" id="517417"/>
    <lineage>
        <taxon>Bacteria</taxon>
        <taxon>Pseudomonadati</taxon>
        <taxon>Chlorobiota</taxon>
        <taxon>Chlorobiia</taxon>
        <taxon>Chlorobiales</taxon>
        <taxon>Chlorobiaceae</taxon>
        <taxon>Chlorobaculum</taxon>
    </lineage>
</organism>
<dbReference type="EC" id="1.7.1.13" evidence="1"/>
<dbReference type="EMBL" id="CP001099">
    <property type="protein sequence ID" value="ACF10972.1"/>
    <property type="molecule type" value="Genomic_DNA"/>
</dbReference>
<dbReference type="RefSeq" id="WP_012501805.1">
    <property type="nucleotide sequence ID" value="NC_011027.1"/>
</dbReference>
<dbReference type="SMR" id="B3QM19"/>
<dbReference type="STRING" id="517417.Cpar_0550"/>
<dbReference type="KEGG" id="cpc:Cpar_0550"/>
<dbReference type="eggNOG" id="COG0780">
    <property type="taxonomic scope" value="Bacteria"/>
</dbReference>
<dbReference type="HOGENOM" id="CLU_102489_1_0_10"/>
<dbReference type="OrthoDB" id="9795077at2"/>
<dbReference type="UniPathway" id="UPA00392"/>
<dbReference type="Proteomes" id="UP000008811">
    <property type="component" value="Chromosome"/>
</dbReference>
<dbReference type="GO" id="GO:0005737">
    <property type="term" value="C:cytoplasm"/>
    <property type="evidence" value="ECO:0007669"/>
    <property type="project" value="UniProtKB-SubCell"/>
</dbReference>
<dbReference type="GO" id="GO:0033739">
    <property type="term" value="F:preQ1 synthase activity"/>
    <property type="evidence" value="ECO:0007669"/>
    <property type="project" value="UniProtKB-UniRule"/>
</dbReference>
<dbReference type="GO" id="GO:0008616">
    <property type="term" value="P:queuosine biosynthetic process"/>
    <property type="evidence" value="ECO:0007669"/>
    <property type="project" value="UniProtKB-UniRule"/>
</dbReference>
<dbReference type="GO" id="GO:0006400">
    <property type="term" value="P:tRNA modification"/>
    <property type="evidence" value="ECO:0007669"/>
    <property type="project" value="UniProtKB-UniRule"/>
</dbReference>
<dbReference type="Gene3D" id="3.30.1130.10">
    <property type="match status" value="1"/>
</dbReference>
<dbReference type="HAMAP" id="MF_00818">
    <property type="entry name" value="QueF_type1"/>
    <property type="match status" value="1"/>
</dbReference>
<dbReference type="InterPro" id="IPR043133">
    <property type="entry name" value="GTP-CH-I_C/QueF"/>
</dbReference>
<dbReference type="InterPro" id="IPR050084">
    <property type="entry name" value="NADPH_dep_7-cyano-7-deazaG_red"/>
</dbReference>
<dbReference type="InterPro" id="IPR029500">
    <property type="entry name" value="QueF"/>
</dbReference>
<dbReference type="InterPro" id="IPR016856">
    <property type="entry name" value="QueF_type1"/>
</dbReference>
<dbReference type="NCBIfam" id="TIGR03139">
    <property type="entry name" value="QueF-II"/>
    <property type="match status" value="1"/>
</dbReference>
<dbReference type="PANTHER" id="PTHR34354">
    <property type="entry name" value="NADPH-DEPENDENT 7-CYANO-7-DEAZAGUANINE REDUCTASE"/>
    <property type="match status" value="1"/>
</dbReference>
<dbReference type="PANTHER" id="PTHR34354:SF1">
    <property type="entry name" value="NADPH-DEPENDENT 7-CYANO-7-DEAZAGUANINE REDUCTASE"/>
    <property type="match status" value="1"/>
</dbReference>
<dbReference type="Pfam" id="PF14489">
    <property type="entry name" value="QueF"/>
    <property type="match status" value="1"/>
</dbReference>
<dbReference type="PIRSF" id="PIRSF027377">
    <property type="entry name" value="Nitrile_oxidored_QueF"/>
    <property type="match status" value="1"/>
</dbReference>
<dbReference type="SUPFAM" id="SSF55620">
    <property type="entry name" value="Tetrahydrobiopterin biosynthesis enzymes-like"/>
    <property type="match status" value="1"/>
</dbReference>